<sequence length="179" mass="20314">MAKLHDYYRDTVVNELKAKFNYSSVMQVPRIEKITLNMGVGEALTDKKLLDNAVADLAAISGQKPLVTKARKSVAGFKIRQGYPIGCKVTLRGERMWEFFERLITIAVPRIRDFRGLNTKSFDGRGNYSMGVREQIIFPEIDYDKVDRVRGLDITITTTAKSDEEGQALLAAFNFPFRK</sequence>
<feature type="chain" id="PRO_1000052745" description="Large ribosomal subunit protein uL5">
    <location>
        <begin position="1"/>
        <end position="179"/>
    </location>
</feature>
<organism>
    <name type="scientific">Histophilus somni (strain 129Pt)</name>
    <name type="common">Haemophilus somnus</name>
    <dbReference type="NCBI Taxonomy" id="205914"/>
    <lineage>
        <taxon>Bacteria</taxon>
        <taxon>Pseudomonadati</taxon>
        <taxon>Pseudomonadota</taxon>
        <taxon>Gammaproteobacteria</taxon>
        <taxon>Pasteurellales</taxon>
        <taxon>Pasteurellaceae</taxon>
        <taxon>Histophilus</taxon>
    </lineage>
</organism>
<keyword id="KW-0687">Ribonucleoprotein</keyword>
<keyword id="KW-0689">Ribosomal protein</keyword>
<keyword id="KW-0694">RNA-binding</keyword>
<keyword id="KW-0699">rRNA-binding</keyword>
<keyword id="KW-0820">tRNA-binding</keyword>
<protein>
    <recommendedName>
        <fullName evidence="1">Large ribosomal subunit protein uL5</fullName>
    </recommendedName>
    <alternativeName>
        <fullName evidence="2">50S ribosomal protein L5</fullName>
    </alternativeName>
</protein>
<dbReference type="EMBL" id="CP000436">
    <property type="protein sequence ID" value="ABI24353.1"/>
    <property type="molecule type" value="Genomic_DNA"/>
</dbReference>
<dbReference type="SMR" id="Q0I150"/>
<dbReference type="KEGG" id="hso:HS_0072"/>
<dbReference type="eggNOG" id="COG0094">
    <property type="taxonomic scope" value="Bacteria"/>
</dbReference>
<dbReference type="HOGENOM" id="CLU_061015_2_1_6"/>
<dbReference type="GO" id="GO:1990904">
    <property type="term" value="C:ribonucleoprotein complex"/>
    <property type="evidence" value="ECO:0007669"/>
    <property type="project" value="UniProtKB-KW"/>
</dbReference>
<dbReference type="GO" id="GO:0005840">
    <property type="term" value="C:ribosome"/>
    <property type="evidence" value="ECO:0007669"/>
    <property type="project" value="UniProtKB-KW"/>
</dbReference>
<dbReference type="GO" id="GO:0019843">
    <property type="term" value="F:rRNA binding"/>
    <property type="evidence" value="ECO:0007669"/>
    <property type="project" value="UniProtKB-UniRule"/>
</dbReference>
<dbReference type="GO" id="GO:0003735">
    <property type="term" value="F:structural constituent of ribosome"/>
    <property type="evidence" value="ECO:0007669"/>
    <property type="project" value="InterPro"/>
</dbReference>
<dbReference type="GO" id="GO:0000049">
    <property type="term" value="F:tRNA binding"/>
    <property type="evidence" value="ECO:0007669"/>
    <property type="project" value="UniProtKB-UniRule"/>
</dbReference>
<dbReference type="GO" id="GO:0006412">
    <property type="term" value="P:translation"/>
    <property type="evidence" value="ECO:0007669"/>
    <property type="project" value="UniProtKB-UniRule"/>
</dbReference>
<dbReference type="FunFam" id="3.30.1440.10:FF:000001">
    <property type="entry name" value="50S ribosomal protein L5"/>
    <property type="match status" value="1"/>
</dbReference>
<dbReference type="Gene3D" id="3.30.1440.10">
    <property type="match status" value="1"/>
</dbReference>
<dbReference type="HAMAP" id="MF_01333_B">
    <property type="entry name" value="Ribosomal_uL5_B"/>
    <property type="match status" value="1"/>
</dbReference>
<dbReference type="InterPro" id="IPR002132">
    <property type="entry name" value="Ribosomal_uL5"/>
</dbReference>
<dbReference type="InterPro" id="IPR020930">
    <property type="entry name" value="Ribosomal_uL5_bac-type"/>
</dbReference>
<dbReference type="InterPro" id="IPR031309">
    <property type="entry name" value="Ribosomal_uL5_C"/>
</dbReference>
<dbReference type="InterPro" id="IPR020929">
    <property type="entry name" value="Ribosomal_uL5_CS"/>
</dbReference>
<dbReference type="InterPro" id="IPR022803">
    <property type="entry name" value="Ribosomal_uL5_dom_sf"/>
</dbReference>
<dbReference type="InterPro" id="IPR031310">
    <property type="entry name" value="Ribosomal_uL5_N"/>
</dbReference>
<dbReference type="NCBIfam" id="NF000585">
    <property type="entry name" value="PRK00010.1"/>
    <property type="match status" value="1"/>
</dbReference>
<dbReference type="PANTHER" id="PTHR11994">
    <property type="entry name" value="60S RIBOSOMAL PROTEIN L11-RELATED"/>
    <property type="match status" value="1"/>
</dbReference>
<dbReference type="Pfam" id="PF00281">
    <property type="entry name" value="Ribosomal_L5"/>
    <property type="match status" value="1"/>
</dbReference>
<dbReference type="Pfam" id="PF00673">
    <property type="entry name" value="Ribosomal_L5_C"/>
    <property type="match status" value="1"/>
</dbReference>
<dbReference type="PIRSF" id="PIRSF002161">
    <property type="entry name" value="Ribosomal_L5"/>
    <property type="match status" value="1"/>
</dbReference>
<dbReference type="SUPFAM" id="SSF55282">
    <property type="entry name" value="RL5-like"/>
    <property type="match status" value="1"/>
</dbReference>
<dbReference type="PROSITE" id="PS00358">
    <property type="entry name" value="RIBOSOMAL_L5"/>
    <property type="match status" value="1"/>
</dbReference>
<name>RL5_HISS1</name>
<accession>Q0I150</accession>
<evidence type="ECO:0000255" key="1">
    <source>
        <dbReference type="HAMAP-Rule" id="MF_01333"/>
    </source>
</evidence>
<evidence type="ECO:0000305" key="2"/>
<proteinExistence type="inferred from homology"/>
<comment type="function">
    <text evidence="1">This is one of the proteins that bind and probably mediate the attachment of the 5S RNA into the large ribosomal subunit, where it forms part of the central protuberance. In the 70S ribosome it contacts protein S13 of the 30S subunit (bridge B1b), connecting the 2 subunits; this bridge is implicated in subunit movement. Contacts the P site tRNA; the 5S rRNA and some of its associated proteins might help stabilize positioning of ribosome-bound tRNAs.</text>
</comment>
<comment type="subunit">
    <text evidence="1">Part of the 50S ribosomal subunit; part of the 5S rRNA/L5/L18/L25 subcomplex. Contacts the 5S rRNA and the P site tRNA. Forms a bridge to the 30S subunit in the 70S ribosome.</text>
</comment>
<comment type="similarity">
    <text evidence="1">Belongs to the universal ribosomal protein uL5 family.</text>
</comment>
<gene>
    <name evidence="1" type="primary">rplE</name>
    <name type="ordered locus">HS_0072</name>
</gene>
<reference key="1">
    <citation type="journal article" date="2007" name="J. Bacteriol.">
        <title>Complete genome sequence of Haemophilus somnus (Histophilus somni) strain 129Pt and comparison to Haemophilus ducreyi 35000HP and Haemophilus influenzae Rd.</title>
        <authorList>
            <person name="Challacombe J.F."/>
            <person name="Duncan A.J."/>
            <person name="Brettin T.S."/>
            <person name="Bruce D."/>
            <person name="Chertkov O."/>
            <person name="Detter J.C."/>
            <person name="Han C.S."/>
            <person name="Misra M."/>
            <person name="Richardson P."/>
            <person name="Tapia R."/>
            <person name="Thayer N."/>
            <person name="Xie G."/>
            <person name="Inzana T.J."/>
        </authorList>
    </citation>
    <scope>NUCLEOTIDE SEQUENCE [LARGE SCALE GENOMIC DNA]</scope>
    <source>
        <strain>129Pt</strain>
    </source>
</reference>